<feature type="chain" id="PRO_0000268900" description="Sigma factor-binding protein Crl">
    <location>
        <begin position="1"/>
        <end position="133"/>
    </location>
</feature>
<feature type="region of interest" description="Essential for activity" evidence="1">
    <location>
        <begin position="99"/>
        <end position="122"/>
    </location>
</feature>
<protein>
    <recommendedName>
        <fullName evidence="1">Sigma factor-binding protein Crl</fullName>
    </recommendedName>
</protein>
<organism>
    <name type="scientific">Photobacterium profundum (strain SS9)</name>
    <dbReference type="NCBI Taxonomy" id="298386"/>
    <lineage>
        <taxon>Bacteria</taxon>
        <taxon>Pseudomonadati</taxon>
        <taxon>Pseudomonadota</taxon>
        <taxon>Gammaproteobacteria</taxon>
        <taxon>Vibrionales</taxon>
        <taxon>Vibrionaceae</taxon>
        <taxon>Photobacterium</taxon>
    </lineage>
</organism>
<comment type="function">
    <text evidence="1">Binds to the sigma-S subunit of RNA polymerase, activating expression of sigma-S-regulated genes. Stimulates RNA polymerase holoenzyme formation and may bind to several other sigma factors, such as sigma-70 and sigma-32.</text>
</comment>
<comment type="subcellular location">
    <subcellularLocation>
        <location evidence="1">Cytoplasm</location>
    </subcellularLocation>
</comment>
<comment type="similarity">
    <text evidence="1">Belongs to the Crl family.</text>
</comment>
<evidence type="ECO:0000255" key="1">
    <source>
        <dbReference type="HAMAP-Rule" id="MF_01178"/>
    </source>
</evidence>
<keyword id="KW-0010">Activator</keyword>
<keyword id="KW-0963">Cytoplasm</keyword>
<keyword id="KW-1185">Reference proteome</keyword>
<keyword id="KW-0804">Transcription</keyword>
<keyword id="KW-0805">Transcription regulation</keyword>
<reference key="1">
    <citation type="journal article" date="2005" name="Science">
        <title>Life at depth: Photobacterium profundum genome sequence and expression analysis.</title>
        <authorList>
            <person name="Vezzi A."/>
            <person name="Campanaro S."/>
            <person name="D'Angelo M."/>
            <person name="Simonato F."/>
            <person name="Vitulo N."/>
            <person name="Lauro F.M."/>
            <person name="Cestaro A."/>
            <person name="Malacrida G."/>
            <person name="Simionati B."/>
            <person name="Cannata N."/>
            <person name="Romualdi C."/>
            <person name="Bartlett D.H."/>
            <person name="Valle G."/>
        </authorList>
    </citation>
    <scope>NUCLEOTIDE SEQUENCE [LARGE SCALE GENOMIC DNA]</scope>
    <source>
        <strain>ATCC BAA-1253 / SS9</strain>
    </source>
</reference>
<name>CRL_PHOPR</name>
<dbReference type="EMBL" id="CR378665">
    <property type="protein sequence ID" value="CAG19251.1"/>
    <property type="molecule type" value="Genomic_DNA"/>
</dbReference>
<dbReference type="RefSeq" id="WP_011217588.1">
    <property type="nucleotide sequence ID" value="NC_006370.1"/>
</dbReference>
<dbReference type="SMR" id="Q6LTX4"/>
<dbReference type="STRING" id="298386.PBPRA0838"/>
<dbReference type="KEGG" id="ppr:PBPRA0838"/>
<dbReference type="eggNOG" id="ENOG502ZQ8E">
    <property type="taxonomic scope" value="Bacteria"/>
</dbReference>
<dbReference type="HOGENOM" id="CLU_136773_1_0_6"/>
<dbReference type="Proteomes" id="UP000000593">
    <property type="component" value="Chromosome 1"/>
</dbReference>
<dbReference type="GO" id="GO:0005737">
    <property type="term" value="C:cytoplasm"/>
    <property type="evidence" value="ECO:0007669"/>
    <property type="project" value="UniProtKB-SubCell"/>
</dbReference>
<dbReference type="GO" id="GO:0045893">
    <property type="term" value="P:positive regulation of DNA-templated transcription"/>
    <property type="evidence" value="ECO:0007669"/>
    <property type="project" value="UniProtKB-UniRule"/>
</dbReference>
<dbReference type="Gene3D" id="3.30.310.230">
    <property type="entry name" value="Sigma factor-binding protein Crl monomer"/>
    <property type="match status" value="1"/>
</dbReference>
<dbReference type="HAMAP" id="MF_01178">
    <property type="entry name" value="Crl"/>
    <property type="match status" value="1"/>
</dbReference>
<dbReference type="InterPro" id="IPR009986">
    <property type="entry name" value="Tscrpt_reg_Crl"/>
</dbReference>
<dbReference type="InterPro" id="IPR038208">
    <property type="entry name" value="Tscrpt_reg_Crl_sf"/>
</dbReference>
<dbReference type="NCBIfam" id="NF008217">
    <property type="entry name" value="PRK10984.1"/>
    <property type="match status" value="1"/>
</dbReference>
<dbReference type="Pfam" id="PF07417">
    <property type="entry name" value="Crl"/>
    <property type="match status" value="1"/>
</dbReference>
<gene>
    <name evidence="1" type="primary">crl</name>
    <name type="ordered locus">PBPRA0838</name>
</gene>
<sequence length="133" mass="15198">MTTDTIFPPHGRLMTKLTALGPYLRKQQSKEGEFFFDCLASCISANKSPEEREFWGWWLVLTATDIGFEYRYDFGRYDAKGNWIKGTLPAKHTEAVLKTLDDFYVKLTKFVKEDCQLDLQASAELEEAVLGSA</sequence>
<accession>Q6LTX4</accession>
<proteinExistence type="inferred from homology"/>